<dbReference type="EMBL" id="X71621">
    <property type="protein sequence ID" value="CAA50627.1"/>
    <property type="molecule type" value="Genomic_DNA"/>
</dbReference>
<dbReference type="EMBL" id="Z28047">
    <property type="protein sequence ID" value="CAA81882.1"/>
    <property type="molecule type" value="Genomic_DNA"/>
</dbReference>
<dbReference type="EMBL" id="BK006944">
    <property type="protein sequence ID" value="DAA09110.1"/>
    <property type="molecule type" value="Genomic_DNA"/>
</dbReference>
<dbReference type="PIR" id="S37868">
    <property type="entry name" value="S37868"/>
</dbReference>
<dbReference type="RefSeq" id="NP_012877.1">
    <property type="nucleotide sequence ID" value="NM_001179613.1"/>
</dbReference>
<dbReference type="BioGRID" id="34086">
    <property type="interactions" value="49"/>
</dbReference>
<dbReference type="DIP" id="DIP-3998N"/>
<dbReference type="FunCoup" id="P36090">
    <property type="interactions" value="51"/>
</dbReference>
<dbReference type="IntAct" id="P36090">
    <property type="interactions" value="7"/>
</dbReference>
<dbReference type="MINT" id="P36090"/>
<dbReference type="STRING" id="4932.YKL047W"/>
<dbReference type="iPTMnet" id="P36090"/>
<dbReference type="SwissPalm" id="P36090"/>
<dbReference type="PaxDb" id="4932-YKL047W"/>
<dbReference type="PeptideAtlas" id="P36090"/>
<dbReference type="EnsemblFungi" id="YKL047W_mRNA">
    <property type="protein sequence ID" value="YKL047W"/>
    <property type="gene ID" value="YKL047W"/>
</dbReference>
<dbReference type="GeneID" id="853819"/>
<dbReference type="KEGG" id="sce:YKL047W"/>
<dbReference type="AGR" id="SGD:S000001530"/>
<dbReference type="SGD" id="S000001530">
    <property type="gene designation" value="ANR2"/>
</dbReference>
<dbReference type="VEuPathDB" id="FungiDB:YKL047W"/>
<dbReference type="eggNOG" id="KOG4704">
    <property type="taxonomic scope" value="Eukaryota"/>
</dbReference>
<dbReference type="HOGENOM" id="CLU_019791_0_0_1"/>
<dbReference type="InParanoid" id="P36090"/>
<dbReference type="OMA" id="GYTIVWK"/>
<dbReference type="OrthoDB" id="2152680at2759"/>
<dbReference type="BioCyc" id="YEAST:G3O-31848-MONOMER"/>
<dbReference type="BioGRID-ORCS" id="853819">
    <property type="hits" value="1 hit in 10 CRISPR screens"/>
</dbReference>
<dbReference type="PRO" id="PR:P36090"/>
<dbReference type="Proteomes" id="UP000002311">
    <property type="component" value="Chromosome XI"/>
</dbReference>
<dbReference type="RNAct" id="P36090">
    <property type="molecule type" value="protein"/>
</dbReference>
<dbReference type="GO" id="GO:0005737">
    <property type="term" value="C:cytoplasm"/>
    <property type="evidence" value="ECO:0007005"/>
    <property type="project" value="SGD"/>
</dbReference>
<dbReference type="GO" id="GO:0005783">
    <property type="term" value="C:endoplasmic reticulum"/>
    <property type="evidence" value="ECO:0007005"/>
    <property type="project" value="SGD"/>
</dbReference>
<dbReference type="GO" id="GO:0005811">
    <property type="term" value="C:lipid droplet"/>
    <property type="evidence" value="ECO:0000314"/>
    <property type="project" value="SGD"/>
</dbReference>
<dbReference type="InterPro" id="IPR028115">
    <property type="entry name" value="DUF4484"/>
</dbReference>
<dbReference type="InterPro" id="IPR018626">
    <property type="entry name" value="LCHN/Anr2"/>
</dbReference>
<dbReference type="InterPro" id="IPR053056">
    <property type="entry name" value="Lipid_Metab_Assoc_Protein"/>
</dbReference>
<dbReference type="InterPro" id="IPR037516">
    <property type="entry name" value="Tripartite_DENN"/>
</dbReference>
<dbReference type="PANTHER" id="PTHR28153:SF1">
    <property type="entry name" value="DUF4484 DOMAIN-CONTAINING PROTEIN"/>
    <property type="match status" value="1"/>
</dbReference>
<dbReference type="PANTHER" id="PTHR28153">
    <property type="entry name" value="PROTEIN, PUTATIVE-RELATED"/>
    <property type="match status" value="1"/>
</dbReference>
<dbReference type="Pfam" id="PF09804">
    <property type="entry name" value="DENND11"/>
    <property type="match status" value="1"/>
</dbReference>
<dbReference type="Pfam" id="PF14831">
    <property type="entry name" value="DUF4484"/>
    <property type="match status" value="1"/>
</dbReference>
<dbReference type="PROSITE" id="PS50211">
    <property type="entry name" value="DENN"/>
    <property type="match status" value="1"/>
</dbReference>
<proteinExistence type="evidence at protein level"/>
<comment type="function">
    <text evidence="6">May be involved in lipid metabolism.</text>
</comment>
<comment type="subcellular location">
    <subcellularLocation>
        <location evidence="3 6">Lipid droplet</location>
    </subcellularLocation>
</comment>
<comment type="PTM">
    <text evidence="5">Palmitoylated by AKR1.</text>
</comment>
<comment type="miscellaneous">
    <text evidence="4">Present with 2550 molecules/cell in log phase SD medium.</text>
</comment>
<accession>P36090</accession>
<accession>D6VXP0</accession>
<protein>
    <recommendedName>
        <fullName>Uncharacterized protein ANR2</fullName>
    </recommendedName>
    <alternativeName>
        <fullName>AVL9-related family protein 2</fullName>
    </alternativeName>
</protein>
<evidence type="ECO:0000255" key="1"/>
<evidence type="ECO:0000255" key="2">
    <source>
        <dbReference type="PROSITE-ProRule" id="PRU00304"/>
    </source>
</evidence>
<evidence type="ECO:0000269" key="3">
    <source>
    </source>
</evidence>
<evidence type="ECO:0000269" key="4">
    <source>
    </source>
</evidence>
<evidence type="ECO:0000269" key="5">
    <source>
    </source>
</evidence>
<evidence type="ECO:0000269" key="6">
    <source>
    </source>
</evidence>
<gene>
    <name type="primary">ANR2</name>
    <name type="ordered locus">YKL047W</name>
    <name type="ORF">YKL260</name>
</gene>
<name>ANR2_YEAST</name>
<keyword id="KW-0551">Lipid droplet</keyword>
<keyword id="KW-0449">Lipoprotein</keyword>
<keyword id="KW-0564">Palmitate</keyword>
<keyword id="KW-1185">Reference proteome</keyword>
<reference key="1">
    <citation type="journal article" date="1993" name="Yeast">
        <title>The sequence of a 17.5 kb DNA fragment on the left arm of yeast chromosome XI identifies the protein kinase gene ELM1, the DNA primase gene PRI2, a new gene encoding a putative histone and seven new open reading frames.</title>
        <authorList>
            <person name="Purnelle B."/>
            <person name="Tettelin H."/>
            <person name="van Dyck L."/>
            <person name="Skala J."/>
            <person name="Goffeau A."/>
        </authorList>
    </citation>
    <scope>NUCLEOTIDE SEQUENCE [GENOMIC DNA]</scope>
    <source>
        <strain>ATCC 204508 / S288c</strain>
    </source>
</reference>
<reference key="2">
    <citation type="journal article" date="1994" name="Nature">
        <title>Complete DNA sequence of yeast chromosome XI.</title>
        <authorList>
            <person name="Dujon B."/>
            <person name="Alexandraki D."/>
            <person name="Andre B."/>
            <person name="Ansorge W."/>
            <person name="Baladron V."/>
            <person name="Ballesta J.P.G."/>
            <person name="Banrevi A."/>
            <person name="Bolle P.-A."/>
            <person name="Bolotin-Fukuhara M."/>
            <person name="Bossier P."/>
            <person name="Bou G."/>
            <person name="Boyer J."/>
            <person name="Buitrago M.J."/>
            <person name="Cheret G."/>
            <person name="Colleaux L."/>
            <person name="Daignan-Fornier B."/>
            <person name="del Rey F."/>
            <person name="Dion C."/>
            <person name="Domdey H."/>
            <person name="Duesterhoeft A."/>
            <person name="Duesterhus S."/>
            <person name="Entian K.-D."/>
            <person name="Erfle H."/>
            <person name="Esteban P.F."/>
            <person name="Feldmann H."/>
            <person name="Fernandes L."/>
            <person name="Fobo G.M."/>
            <person name="Fritz C."/>
            <person name="Fukuhara H."/>
            <person name="Gabel C."/>
            <person name="Gaillon L."/>
            <person name="Garcia-Cantalejo J.M."/>
            <person name="Garcia-Ramirez J.J."/>
            <person name="Gent M.E."/>
            <person name="Ghazvini M."/>
            <person name="Goffeau A."/>
            <person name="Gonzalez A."/>
            <person name="Grothues D."/>
            <person name="Guerreiro P."/>
            <person name="Hegemann J.H."/>
            <person name="Hewitt N."/>
            <person name="Hilger F."/>
            <person name="Hollenberg C.P."/>
            <person name="Horaitis O."/>
            <person name="Indge K.J."/>
            <person name="Jacquier A."/>
            <person name="James C.M."/>
            <person name="Jauniaux J.-C."/>
            <person name="Jimenez A."/>
            <person name="Keuchel H."/>
            <person name="Kirchrath L."/>
            <person name="Kleine K."/>
            <person name="Koetter P."/>
            <person name="Legrain P."/>
            <person name="Liebl S."/>
            <person name="Louis E.J."/>
            <person name="Maia e Silva A."/>
            <person name="Marck C."/>
            <person name="Monnier A.-L."/>
            <person name="Moestl D."/>
            <person name="Mueller S."/>
            <person name="Obermaier B."/>
            <person name="Oliver S.G."/>
            <person name="Pallier C."/>
            <person name="Pascolo S."/>
            <person name="Pfeiffer F."/>
            <person name="Philippsen P."/>
            <person name="Planta R.J."/>
            <person name="Pohl F.M."/>
            <person name="Pohl T.M."/>
            <person name="Poehlmann R."/>
            <person name="Portetelle D."/>
            <person name="Purnelle B."/>
            <person name="Puzos V."/>
            <person name="Ramezani Rad M."/>
            <person name="Rasmussen S.W."/>
            <person name="Remacha M.A."/>
            <person name="Revuelta J.L."/>
            <person name="Richard G.-F."/>
            <person name="Rieger M."/>
            <person name="Rodrigues-Pousada C."/>
            <person name="Rose M."/>
            <person name="Rupp T."/>
            <person name="Santos M.A."/>
            <person name="Schwager C."/>
            <person name="Sensen C."/>
            <person name="Skala J."/>
            <person name="Soares H."/>
            <person name="Sor F."/>
            <person name="Stegemann J."/>
            <person name="Tettelin H."/>
            <person name="Thierry A."/>
            <person name="Tzermia M."/>
            <person name="Urrestarazu L.A."/>
            <person name="van Dyck L."/>
            <person name="van Vliet-Reedijk J.C."/>
            <person name="Valens M."/>
            <person name="Vandenbol M."/>
            <person name="Vilela C."/>
            <person name="Vissers S."/>
            <person name="von Wettstein D."/>
            <person name="Voss H."/>
            <person name="Wiemann S."/>
            <person name="Xu G."/>
            <person name="Zimmermann J."/>
            <person name="Haasemann M."/>
            <person name="Becker I."/>
            <person name="Mewes H.-W."/>
        </authorList>
    </citation>
    <scope>NUCLEOTIDE SEQUENCE [LARGE SCALE GENOMIC DNA]</scope>
    <source>
        <strain>ATCC 204508 / S288c</strain>
    </source>
</reference>
<reference key="3">
    <citation type="journal article" date="2014" name="G3 (Bethesda)">
        <title>The reference genome sequence of Saccharomyces cerevisiae: Then and now.</title>
        <authorList>
            <person name="Engel S.R."/>
            <person name="Dietrich F.S."/>
            <person name="Fisk D.G."/>
            <person name="Binkley G."/>
            <person name="Balakrishnan R."/>
            <person name="Costanzo M.C."/>
            <person name="Dwight S.S."/>
            <person name="Hitz B.C."/>
            <person name="Karra K."/>
            <person name="Nash R.S."/>
            <person name="Weng S."/>
            <person name="Wong E.D."/>
            <person name="Lloyd P."/>
            <person name="Skrzypek M.S."/>
            <person name="Miyasato S.R."/>
            <person name="Simison M."/>
            <person name="Cherry J.M."/>
        </authorList>
    </citation>
    <scope>GENOME REANNOTATION</scope>
    <source>
        <strain>ATCC 204508 / S288c</strain>
    </source>
</reference>
<reference key="4">
    <citation type="journal article" date="2003" name="Nature">
        <title>Global analysis of protein localization in budding yeast.</title>
        <authorList>
            <person name="Huh W.-K."/>
            <person name="Falvo J.V."/>
            <person name="Gerke L.C."/>
            <person name="Carroll A.S."/>
            <person name="Howson R.W."/>
            <person name="Weissman J.S."/>
            <person name="O'Shea E.K."/>
        </authorList>
    </citation>
    <scope>SUBCELLULAR LOCATION [LARGE SCALE ANALYSIS]</scope>
</reference>
<reference key="5">
    <citation type="journal article" date="2003" name="Nature">
        <title>Global analysis of protein expression in yeast.</title>
        <authorList>
            <person name="Ghaemmaghami S."/>
            <person name="Huh W.-K."/>
            <person name="Bower K."/>
            <person name="Howson R.W."/>
            <person name="Belle A."/>
            <person name="Dephoure N."/>
            <person name="O'Shea E.K."/>
            <person name="Weissman J.S."/>
        </authorList>
    </citation>
    <scope>LEVEL OF PROTEIN EXPRESSION [LARGE SCALE ANALYSIS]</scope>
</reference>
<reference key="6">
    <citation type="journal article" date="2006" name="Cell">
        <title>Global analysis of protein palmitoylation in yeast.</title>
        <authorList>
            <person name="Roth A.F."/>
            <person name="Wan J."/>
            <person name="Bailey A.O."/>
            <person name="Sun B."/>
            <person name="Kuchar J.A."/>
            <person name="Green W.N."/>
            <person name="Phinney B.S."/>
            <person name="Yates J.R. III"/>
            <person name="Davis N.G."/>
        </authorList>
    </citation>
    <scope>PALMITOYLATION</scope>
</reference>
<reference key="7">
    <citation type="journal article" date="2007" name="Mol. Biol. Cell">
        <title>Avl9p, a member of a novel protein superfamily, functions in the late secretory pathway.</title>
        <authorList>
            <person name="Harsay E."/>
            <person name="Schekman R."/>
        </authorList>
    </citation>
    <scope>GENE NAME</scope>
</reference>
<reference key="8">
    <citation type="journal article" date="2008" name="Mol. Cell. Proteomics">
        <title>A multidimensional chromatography technology for in-depth phosphoproteome analysis.</title>
        <authorList>
            <person name="Albuquerque C.P."/>
            <person name="Smolka M.B."/>
            <person name="Payne S.H."/>
            <person name="Bafna V."/>
            <person name="Eng J."/>
            <person name="Zhou H."/>
        </authorList>
    </citation>
    <scope>IDENTIFICATION BY MASS SPECTROMETRY [LARGE SCALE ANALYSIS]</scope>
</reference>
<reference key="9">
    <citation type="journal article" date="2014" name="J. Lipid Res.">
        <title>High-confidence proteomic analysis of yeast lipid droplets identifies additional droplet proteins and reveals connections to dolichol synthesis and sterol acetylation.</title>
        <authorList>
            <person name="Currie E."/>
            <person name="Guo X."/>
            <person name="Christiano R."/>
            <person name="Chitraju C."/>
            <person name="Kory N."/>
            <person name="Harrison K."/>
            <person name="Haas J."/>
            <person name="Walther T.C."/>
            <person name="Farese R.V. Jr."/>
        </authorList>
    </citation>
    <scope>FUNCTION</scope>
    <scope>SUBCELLULAR LOCATION</scope>
    <scope>IDENTIFICATION BY MASS SPECTROMETRY</scope>
</reference>
<sequence length="516" mass="58895">MNSGGEEPTIKPNVFNITQLLNSNGEKPGIACIFLSKFDMKKGNIIIWSKSINGAAIDLSNIEFKSLPAGIHEQTDDVVNFVVPKELDVCQTAKTTTYDYGIAYFKQNSFDIIENDNRIDRSKVQMFSLGVIIDVQNASSDSKKHFYKEIYHAYAANRYSSYLESLLGQWIRQRDLDKFDIFEKFFDENNQGHMAENSVEVFEHSPKERRHLVEYLPYWTRKLGPLIFPLWKASLLQSRILILVPQGESFELCNSLAYCVFLISMLPKNLIGNHVSDEYIKPIFTVSTSDIPFLESFKKGNGYVATTSEEILLYKPEIYDIVVKLTSSSTIEESPEKEVEILTASGEQNKATPLDLEVYEKLILGELQEDASTNATCRHHEVTEPISWLQFLIDGFFLLTTAGYLVAPYHLANNFKIPRHVSGPEPNNSEIQIAENLVRYFHRRTSNLYNDLKDVIQKSENIDSEQPITIAASFLTKLNLDCFSKQDHQFVKDIALKWFQRSIDISNLPECLGNLC</sequence>
<feature type="chain" id="PRO_0000203181" description="Uncharacterized protein ANR2">
    <location>
        <begin position="1"/>
        <end position="516"/>
    </location>
</feature>
<feature type="domain" description="uDENN" evidence="2">
    <location>
        <begin position="31"/>
        <end position="185"/>
    </location>
</feature>
<feature type="domain" description="cDENN" evidence="2">
    <location>
        <begin position="211"/>
        <end position="365"/>
    </location>
</feature>
<feature type="domain" description="dDENN" evidence="2">
    <location>
        <begin position="367"/>
        <end position="513"/>
    </location>
</feature>
<feature type="lipid moiety-binding region" description="S-palmitoyl cysteine" evidence="1">
    <location>
        <position position="511"/>
    </location>
</feature>
<feature type="lipid moiety-binding region" description="S-palmitoyl cysteine" evidence="1">
    <location>
        <position position="516"/>
    </location>
</feature>
<organism>
    <name type="scientific">Saccharomyces cerevisiae (strain ATCC 204508 / S288c)</name>
    <name type="common">Baker's yeast</name>
    <dbReference type="NCBI Taxonomy" id="559292"/>
    <lineage>
        <taxon>Eukaryota</taxon>
        <taxon>Fungi</taxon>
        <taxon>Dikarya</taxon>
        <taxon>Ascomycota</taxon>
        <taxon>Saccharomycotina</taxon>
        <taxon>Saccharomycetes</taxon>
        <taxon>Saccharomycetales</taxon>
        <taxon>Saccharomycetaceae</taxon>
        <taxon>Saccharomyces</taxon>
    </lineage>
</organism>